<comment type="function">
    <text evidence="1">Catalyzes the attachment of threonine to tRNA(Thr) in a two-step reaction: L-threonine is first activated by ATP to form Thr-AMP and then transferred to the acceptor end of tRNA(Thr). Also edits incorrectly charged L-seryl-tRNA(Thr).</text>
</comment>
<comment type="catalytic activity">
    <reaction evidence="1">
        <text>tRNA(Thr) + L-threonine + ATP = L-threonyl-tRNA(Thr) + AMP + diphosphate + H(+)</text>
        <dbReference type="Rhea" id="RHEA:24624"/>
        <dbReference type="Rhea" id="RHEA-COMP:9670"/>
        <dbReference type="Rhea" id="RHEA-COMP:9704"/>
        <dbReference type="ChEBI" id="CHEBI:15378"/>
        <dbReference type="ChEBI" id="CHEBI:30616"/>
        <dbReference type="ChEBI" id="CHEBI:33019"/>
        <dbReference type="ChEBI" id="CHEBI:57926"/>
        <dbReference type="ChEBI" id="CHEBI:78442"/>
        <dbReference type="ChEBI" id="CHEBI:78534"/>
        <dbReference type="ChEBI" id="CHEBI:456215"/>
        <dbReference type="EC" id="6.1.1.3"/>
    </reaction>
</comment>
<comment type="cofactor">
    <cofactor evidence="1">
        <name>Zn(2+)</name>
        <dbReference type="ChEBI" id="CHEBI:29105"/>
    </cofactor>
    <text evidence="1">Binds 1 zinc ion per subunit.</text>
</comment>
<comment type="subunit">
    <text evidence="1">Homodimer.</text>
</comment>
<comment type="subcellular location">
    <subcellularLocation>
        <location evidence="1">Cytoplasm</location>
    </subcellularLocation>
</comment>
<comment type="similarity">
    <text evidence="1">Belongs to the class-II aminoacyl-tRNA synthetase family.</text>
</comment>
<proteinExistence type="inferred from homology"/>
<feature type="chain" id="PRO_1000020458" description="Threonine--tRNA ligase">
    <location>
        <begin position="1"/>
        <end position="638"/>
    </location>
</feature>
<feature type="domain" description="TGS" evidence="2">
    <location>
        <begin position="1"/>
        <end position="63"/>
    </location>
</feature>
<feature type="region of interest" description="Catalytic" evidence="1">
    <location>
        <begin position="245"/>
        <end position="536"/>
    </location>
</feature>
<feature type="binding site" evidence="1">
    <location>
        <position position="337"/>
    </location>
    <ligand>
        <name>Zn(2+)</name>
        <dbReference type="ChEBI" id="CHEBI:29105"/>
    </ligand>
</feature>
<feature type="binding site" evidence="1">
    <location>
        <position position="388"/>
    </location>
    <ligand>
        <name>Zn(2+)</name>
        <dbReference type="ChEBI" id="CHEBI:29105"/>
    </ligand>
</feature>
<feature type="binding site" evidence="1">
    <location>
        <position position="513"/>
    </location>
    <ligand>
        <name>Zn(2+)</name>
        <dbReference type="ChEBI" id="CHEBI:29105"/>
    </ligand>
</feature>
<reference key="1">
    <citation type="submission" date="2005-10" db="EMBL/GenBank/DDBJ databases">
        <title>Complete sequence of Pelobacter carbinolicus DSM 2380.</title>
        <authorList>
            <person name="Copeland A."/>
            <person name="Lucas S."/>
            <person name="Lapidus A."/>
            <person name="Barry K."/>
            <person name="Detter J.C."/>
            <person name="Glavina T."/>
            <person name="Hammon N."/>
            <person name="Israni S."/>
            <person name="Pitluck S."/>
            <person name="Chertkov O."/>
            <person name="Schmutz J."/>
            <person name="Larimer F."/>
            <person name="Land M."/>
            <person name="Kyrpides N."/>
            <person name="Ivanova N."/>
            <person name="Richardson P."/>
        </authorList>
    </citation>
    <scope>NUCLEOTIDE SEQUENCE [LARGE SCALE GENOMIC DNA]</scope>
    <source>
        <strain>DSM 2380 / NBRC 103641 / GraBd1</strain>
    </source>
</reference>
<sequence length="638" mass="72853">MVMIQIELPDGSIKEFSETTTPGDIAAGIGSGLARQAVAARFNDRMVDLCTPITESGRLEIITLNSPQGLEVYRHTAAHLMAHAVKDLYGDRVQVTIGPAVENGFYYDFYCEDHAFSPDDFEKIEKRMQELVKANLPIEREEVSRDSAIALFRELGEHYKVELIEDLDAPTVSLYRQGDFVDLCRGPHLPSTGRIKAFKLTSVAGAYWRGSEKNAMLQRIYATAFPDKKELRTYLNKLEEARKRDHRRIGRELDLFSFSEEAGAGLVIWHPKGALLRTLLEDFERREHLRRGYDIVMGPQILRTDLWKTSGHFDNYRENMYFTDVDGQGYGIKPMNCLAHMLIYKARQRSYRDLPLRYFELGTVHRHEKSGVLHGLLRVRGFTQDDAHIICTPDQLDEEIKRVLEFVRDVMAIFGFEYEIEISTRPEKSIGSDADWERATGALMNALKDLELPHDVNEGDGAFYGPKIDIKLKDALDRRWQCATIQCDFTLPERFDLTYVGKDGEKHRPVMLHRVILGAIERFIGVLIEHYAGNFPLWLAPVQAVVINVTDNQADYAKSVSDALRAAGVRVQCDLRNEKLGFKIREAQVDKIPYMLVVGDTEMSDGTVAPRFRSGKNLEPMSPEDFARFVQEECDQYR</sequence>
<accession>Q3A4P3</accession>
<dbReference type="EC" id="6.1.1.3" evidence="1"/>
<dbReference type="EMBL" id="CP000142">
    <property type="protein sequence ID" value="ABA88664.1"/>
    <property type="molecule type" value="Genomic_DNA"/>
</dbReference>
<dbReference type="SMR" id="Q3A4P3"/>
<dbReference type="STRING" id="338963.Pcar_1418"/>
<dbReference type="KEGG" id="pca:Pcar_1418"/>
<dbReference type="eggNOG" id="COG0441">
    <property type="taxonomic scope" value="Bacteria"/>
</dbReference>
<dbReference type="HOGENOM" id="CLU_008554_0_1_7"/>
<dbReference type="OrthoDB" id="9802304at2"/>
<dbReference type="Proteomes" id="UP000002534">
    <property type="component" value="Chromosome"/>
</dbReference>
<dbReference type="GO" id="GO:0005829">
    <property type="term" value="C:cytosol"/>
    <property type="evidence" value="ECO:0007669"/>
    <property type="project" value="TreeGrafter"/>
</dbReference>
<dbReference type="GO" id="GO:0005524">
    <property type="term" value="F:ATP binding"/>
    <property type="evidence" value="ECO:0007669"/>
    <property type="project" value="UniProtKB-UniRule"/>
</dbReference>
<dbReference type="GO" id="GO:0046872">
    <property type="term" value="F:metal ion binding"/>
    <property type="evidence" value="ECO:0007669"/>
    <property type="project" value="UniProtKB-KW"/>
</dbReference>
<dbReference type="GO" id="GO:0004829">
    <property type="term" value="F:threonine-tRNA ligase activity"/>
    <property type="evidence" value="ECO:0007669"/>
    <property type="project" value="UniProtKB-UniRule"/>
</dbReference>
<dbReference type="GO" id="GO:0000049">
    <property type="term" value="F:tRNA binding"/>
    <property type="evidence" value="ECO:0007669"/>
    <property type="project" value="UniProtKB-KW"/>
</dbReference>
<dbReference type="GO" id="GO:0006435">
    <property type="term" value="P:threonyl-tRNA aminoacylation"/>
    <property type="evidence" value="ECO:0007669"/>
    <property type="project" value="UniProtKB-UniRule"/>
</dbReference>
<dbReference type="CDD" id="cd01667">
    <property type="entry name" value="TGS_ThrRS"/>
    <property type="match status" value="1"/>
</dbReference>
<dbReference type="CDD" id="cd00860">
    <property type="entry name" value="ThrRS_anticodon"/>
    <property type="match status" value="1"/>
</dbReference>
<dbReference type="CDD" id="cd00771">
    <property type="entry name" value="ThrRS_core"/>
    <property type="match status" value="1"/>
</dbReference>
<dbReference type="FunFam" id="3.10.20.30:FF:000005">
    <property type="entry name" value="Threonine--tRNA ligase"/>
    <property type="match status" value="1"/>
</dbReference>
<dbReference type="FunFam" id="3.30.54.20:FF:000002">
    <property type="entry name" value="Threonine--tRNA ligase"/>
    <property type="match status" value="1"/>
</dbReference>
<dbReference type="FunFam" id="3.30.930.10:FF:000002">
    <property type="entry name" value="Threonine--tRNA ligase"/>
    <property type="match status" value="1"/>
</dbReference>
<dbReference type="FunFam" id="3.40.50.800:FF:000001">
    <property type="entry name" value="Threonine--tRNA ligase"/>
    <property type="match status" value="1"/>
</dbReference>
<dbReference type="FunFam" id="3.30.980.10:FF:000005">
    <property type="entry name" value="Threonyl-tRNA synthetase, mitochondrial"/>
    <property type="match status" value="1"/>
</dbReference>
<dbReference type="Gene3D" id="3.10.20.30">
    <property type="match status" value="1"/>
</dbReference>
<dbReference type="Gene3D" id="3.30.54.20">
    <property type="match status" value="1"/>
</dbReference>
<dbReference type="Gene3D" id="3.40.50.800">
    <property type="entry name" value="Anticodon-binding domain"/>
    <property type="match status" value="1"/>
</dbReference>
<dbReference type="Gene3D" id="3.30.930.10">
    <property type="entry name" value="Bira Bifunctional Protein, Domain 2"/>
    <property type="match status" value="1"/>
</dbReference>
<dbReference type="Gene3D" id="3.30.980.10">
    <property type="entry name" value="Threonyl-trna Synthetase, Chain A, domain 2"/>
    <property type="match status" value="1"/>
</dbReference>
<dbReference type="HAMAP" id="MF_00184">
    <property type="entry name" value="Thr_tRNA_synth"/>
    <property type="match status" value="1"/>
</dbReference>
<dbReference type="InterPro" id="IPR002314">
    <property type="entry name" value="aa-tRNA-synt_IIb"/>
</dbReference>
<dbReference type="InterPro" id="IPR006195">
    <property type="entry name" value="aa-tRNA-synth_II"/>
</dbReference>
<dbReference type="InterPro" id="IPR045864">
    <property type="entry name" value="aa-tRNA-synth_II/BPL/LPL"/>
</dbReference>
<dbReference type="InterPro" id="IPR004154">
    <property type="entry name" value="Anticodon-bd"/>
</dbReference>
<dbReference type="InterPro" id="IPR036621">
    <property type="entry name" value="Anticodon-bd_dom_sf"/>
</dbReference>
<dbReference type="InterPro" id="IPR012675">
    <property type="entry name" value="Beta-grasp_dom_sf"/>
</dbReference>
<dbReference type="InterPro" id="IPR004095">
    <property type="entry name" value="TGS"/>
</dbReference>
<dbReference type="InterPro" id="IPR012676">
    <property type="entry name" value="TGS-like"/>
</dbReference>
<dbReference type="InterPro" id="IPR002320">
    <property type="entry name" value="Thr-tRNA-ligase_IIa"/>
</dbReference>
<dbReference type="InterPro" id="IPR018163">
    <property type="entry name" value="Thr/Ala-tRNA-synth_IIc_edit"/>
</dbReference>
<dbReference type="InterPro" id="IPR047246">
    <property type="entry name" value="ThrRS_anticodon"/>
</dbReference>
<dbReference type="InterPro" id="IPR033728">
    <property type="entry name" value="ThrRS_core"/>
</dbReference>
<dbReference type="InterPro" id="IPR012947">
    <property type="entry name" value="tRNA_SAD"/>
</dbReference>
<dbReference type="NCBIfam" id="TIGR00418">
    <property type="entry name" value="thrS"/>
    <property type="match status" value="1"/>
</dbReference>
<dbReference type="PANTHER" id="PTHR11451:SF44">
    <property type="entry name" value="THREONINE--TRNA LIGASE, CHLOROPLASTIC_MITOCHONDRIAL 2"/>
    <property type="match status" value="1"/>
</dbReference>
<dbReference type="PANTHER" id="PTHR11451">
    <property type="entry name" value="THREONINE-TRNA LIGASE"/>
    <property type="match status" value="1"/>
</dbReference>
<dbReference type="Pfam" id="PF03129">
    <property type="entry name" value="HGTP_anticodon"/>
    <property type="match status" value="1"/>
</dbReference>
<dbReference type="Pfam" id="PF02824">
    <property type="entry name" value="TGS"/>
    <property type="match status" value="1"/>
</dbReference>
<dbReference type="Pfam" id="PF00587">
    <property type="entry name" value="tRNA-synt_2b"/>
    <property type="match status" value="1"/>
</dbReference>
<dbReference type="Pfam" id="PF07973">
    <property type="entry name" value="tRNA_SAD"/>
    <property type="match status" value="1"/>
</dbReference>
<dbReference type="PRINTS" id="PR01047">
    <property type="entry name" value="TRNASYNTHTHR"/>
</dbReference>
<dbReference type="SMART" id="SM00863">
    <property type="entry name" value="tRNA_SAD"/>
    <property type="match status" value="1"/>
</dbReference>
<dbReference type="SUPFAM" id="SSF52954">
    <property type="entry name" value="Class II aaRS ABD-related"/>
    <property type="match status" value="1"/>
</dbReference>
<dbReference type="SUPFAM" id="SSF55681">
    <property type="entry name" value="Class II aaRS and biotin synthetases"/>
    <property type="match status" value="1"/>
</dbReference>
<dbReference type="SUPFAM" id="SSF81271">
    <property type="entry name" value="TGS-like"/>
    <property type="match status" value="1"/>
</dbReference>
<dbReference type="SUPFAM" id="SSF55186">
    <property type="entry name" value="ThrRS/AlaRS common domain"/>
    <property type="match status" value="1"/>
</dbReference>
<dbReference type="PROSITE" id="PS50862">
    <property type="entry name" value="AA_TRNA_LIGASE_II"/>
    <property type="match status" value="1"/>
</dbReference>
<dbReference type="PROSITE" id="PS51880">
    <property type="entry name" value="TGS"/>
    <property type="match status" value="1"/>
</dbReference>
<name>SYT_SYNC1</name>
<evidence type="ECO:0000255" key="1">
    <source>
        <dbReference type="HAMAP-Rule" id="MF_00184"/>
    </source>
</evidence>
<evidence type="ECO:0000255" key="2">
    <source>
        <dbReference type="PROSITE-ProRule" id="PRU01228"/>
    </source>
</evidence>
<organism>
    <name type="scientific">Syntrophotalea carbinolica (strain DSM 2380 / NBRC 103641 / GraBd1)</name>
    <name type="common">Pelobacter carbinolicus</name>
    <dbReference type="NCBI Taxonomy" id="338963"/>
    <lineage>
        <taxon>Bacteria</taxon>
        <taxon>Pseudomonadati</taxon>
        <taxon>Thermodesulfobacteriota</taxon>
        <taxon>Desulfuromonadia</taxon>
        <taxon>Desulfuromonadales</taxon>
        <taxon>Syntrophotaleaceae</taxon>
        <taxon>Syntrophotalea</taxon>
    </lineage>
</organism>
<protein>
    <recommendedName>
        <fullName evidence="1">Threonine--tRNA ligase</fullName>
        <ecNumber evidence="1">6.1.1.3</ecNumber>
    </recommendedName>
    <alternativeName>
        <fullName evidence="1">Threonyl-tRNA synthetase</fullName>
        <shortName evidence="1">ThrRS</shortName>
    </alternativeName>
</protein>
<gene>
    <name evidence="1" type="primary">thrS</name>
    <name type="ordered locus">Pcar_1418</name>
</gene>
<keyword id="KW-0030">Aminoacyl-tRNA synthetase</keyword>
<keyword id="KW-0067">ATP-binding</keyword>
<keyword id="KW-0963">Cytoplasm</keyword>
<keyword id="KW-0436">Ligase</keyword>
<keyword id="KW-0479">Metal-binding</keyword>
<keyword id="KW-0547">Nucleotide-binding</keyword>
<keyword id="KW-0648">Protein biosynthesis</keyword>
<keyword id="KW-1185">Reference proteome</keyword>
<keyword id="KW-0694">RNA-binding</keyword>
<keyword id="KW-0820">tRNA-binding</keyword>
<keyword id="KW-0862">Zinc</keyword>